<organism>
    <name type="scientific">Salmonella gallinarum (strain 287/91 / NCTC 13346)</name>
    <dbReference type="NCBI Taxonomy" id="550538"/>
    <lineage>
        <taxon>Bacteria</taxon>
        <taxon>Pseudomonadati</taxon>
        <taxon>Pseudomonadota</taxon>
        <taxon>Gammaproteobacteria</taxon>
        <taxon>Enterobacterales</taxon>
        <taxon>Enterobacteriaceae</taxon>
        <taxon>Salmonella</taxon>
    </lineage>
</organism>
<accession>B5RFI9</accession>
<feature type="chain" id="PRO_1000138200" description="Regulator of sigma D">
    <location>
        <begin position="1"/>
        <end position="162"/>
    </location>
</feature>
<dbReference type="EMBL" id="AM933173">
    <property type="protein sequence ID" value="CAR39232.1"/>
    <property type="molecule type" value="Genomic_DNA"/>
</dbReference>
<dbReference type="RefSeq" id="WP_000934315.1">
    <property type="nucleotide sequence ID" value="NC_011274.1"/>
</dbReference>
<dbReference type="SMR" id="B5RFI9"/>
<dbReference type="KEGG" id="seg:SG3441"/>
<dbReference type="HOGENOM" id="CLU_142729_0_0_6"/>
<dbReference type="Proteomes" id="UP000008321">
    <property type="component" value="Chromosome"/>
</dbReference>
<dbReference type="GO" id="GO:0005737">
    <property type="term" value="C:cytoplasm"/>
    <property type="evidence" value="ECO:0007669"/>
    <property type="project" value="UniProtKB-SubCell"/>
</dbReference>
<dbReference type="GO" id="GO:0006355">
    <property type="term" value="P:regulation of DNA-templated transcription"/>
    <property type="evidence" value="ECO:0007669"/>
    <property type="project" value="InterPro"/>
</dbReference>
<dbReference type="FunFam" id="1.20.120.1370:FF:000001">
    <property type="entry name" value="Regulator of sigma D"/>
    <property type="match status" value="1"/>
</dbReference>
<dbReference type="Gene3D" id="1.20.120.1370">
    <property type="entry name" value="Regulator of RNA polymerase sigma(70) subunit, domain 4"/>
    <property type="match status" value="1"/>
</dbReference>
<dbReference type="HAMAP" id="MF_01181">
    <property type="entry name" value="Rsd"/>
    <property type="match status" value="1"/>
</dbReference>
<dbReference type="InterPro" id="IPR038309">
    <property type="entry name" value="Rsd/AlgQ_sf"/>
</dbReference>
<dbReference type="InterPro" id="IPR023785">
    <property type="entry name" value="Sigma70_reg_Rsd"/>
</dbReference>
<dbReference type="InterPro" id="IPR007448">
    <property type="entry name" value="Sigma70_reg_Rsd_AlgQ"/>
</dbReference>
<dbReference type="NCBIfam" id="NF008723">
    <property type="entry name" value="PRK11718.1"/>
    <property type="match status" value="1"/>
</dbReference>
<dbReference type="Pfam" id="PF04353">
    <property type="entry name" value="Rsd_AlgQ"/>
    <property type="match status" value="1"/>
</dbReference>
<dbReference type="PIRSF" id="PIRSF016548">
    <property type="entry name" value="Rsd_AlgQ"/>
    <property type="match status" value="1"/>
</dbReference>
<evidence type="ECO:0000255" key="1">
    <source>
        <dbReference type="HAMAP-Rule" id="MF_01181"/>
    </source>
</evidence>
<proteinExistence type="inferred from homology"/>
<name>RSD_SALG2</name>
<protein>
    <recommendedName>
        <fullName evidence="1">Regulator of sigma D</fullName>
    </recommendedName>
</protein>
<gene>
    <name evidence="1" type="primary">rsd</name>
    <name type="ordered locus">SG3441</name>
</gene>
<sequence>MLNQLENLTERVGGSNKLVDRWLDVRKHLLVAYYNLVGIKPGKESYMRLNEKALDDFCQSLVDYLSAGHFSIYERILHKLEGNGQLLHAAKIWPLLEDNTQRIMDYYDTSLETAIDHDNCLEFQQALSDIGEALEARFVLEDKLIMLVFDAMHDGARVKRPA</sequence>
<keyword id="KW-0963">Cytoplasm</keyword>
<keyword id="KW-0804">Transcription</keyword>
<keyword id="KW-0805">Transcription regulation</keyword>
<reference key="1">
    <citation type="journal article" date="2008" name="Genome Res.">
        <title>Comparative genome analysis of Salmonella enteritidis PT4 and Salmonella gallinarum 287/91 provides insights into evolutionary and host adaptation pathways.</title>
        <authorList>
            <person name="Thomson N.R."/>
            <person name="Clayton D.J."/>
            <person name="Windhorst D."/>
            <person name="Vernikos G."/>
            <person name="Davidson S."/>
            <person name="Churcher C."/>
            <person name="Quail M.A."/>
            <person name="Stevens M."/>
            <person name="Jones M.A."/>
            <person name="Watson M."/>
            <person name="Barron A."/>
            <person name="Layton A."/>
            <person name="Pickard D."/>
            <person name="Kingsley R.A."/>
            <person name="Bignell A."/>
            <person name="Clark L."/>
            <person name="Harris B."/>
            <person name="Ormond D."/>
            <person name="Abdellah Z."/>
            <person name="Brooks K."/>
            <person name="Cherevach I."/>
            <person name="Chillingworth T."/>
            <person name="Woodward J."/>
            <person name="Norberczak H."/>
            <person name="Lord A."/>
            <person name="Arrowsmith C."/>
            <person name="Jagels K."/>
            <person name="Moule S."/>
            <person name="Mungall K."/>
            <person name="Saunders M."/>
            <person name="Whitehead S."/>
            <person name="Chabalgoity J.A."/>
            <person name="Maskell D."/>
            <person name="Humphreys T."/>
            <person name="Roberts M."/>
            <person name="Barrow P.A."/>
            <person name="Dougan G."/>
            <person name="Parkhill J."/>
        </authorList>
    </citation>
    <scope>NUCLEOTIDE SEQUENCE [LARGE SCALE GENOMIC DNA]</scope>
    <source>
        <strain>287/91 / NCTC 13346</strain>
    </source>
</reference>
<comment type="function">
    <text evidence="1">Binds RpoD and negatively regulates RpoD-mediated transcription activation by preventing the interaction between the primary sigma factor RpoD with the catalytic core of the RNA polymerase and with promoter DNA. May be involved in replacement of the RNA polymerase sigma subunit from RpoD to RpoS during the transition from exponential growth to the stationary phase.</text>
</comment>
<comment type="subunit">
    <text evidence="1">Interacts with RpoD.</text>
</comment>
<comment type="subcellular location">
    <subcellularLocation>
        <location evidence="1">Cytoplasm</location>
    </subcellularLocation>
</comment>
<comment type="similarity">
    <text evidence="1">Belongs to the Rsd/AlgQ family.</text>
</comment>